<reference key="1">
    <citation type="journal article" date="2006" name="J. Bacteriol.">
        <title>The genome sequence of Methanosphaera stadtmanae reveals why this human intestinal archaeon is restricted to methanol and H2 for methane formation and ATP synthesis.</title>
        <authorList>
            <person name="Fricke W.F."/>
            <person name="Seedorf H."/>
            <person name="Henne A."/>
            <person name="Kruer M."/>
            <person name="Liesegang H."/>
            <person name="Hedderich R."/>
            <person name="Gottschalk G."/>
            <person name="Thauer R.K."/>
        </authorList>
    </citation>
    <scope>NUCLEOTIDE SEQUENCE [LARGE SCALE GENOMIC DNA]</scope>
    <source>
        <strain>ATCC 43021 / DSM 3091 / JCM 11832 / MCB-3</strain>
    </source>
</reference>
<feature type="chain" id="PRO_0000251596" description="Large ribosomal subunit protein uL15">
    <location>
        <begin position="1"/>
        <end position="145"/>
    </location>
</feature>
<feature type="region of interest" description="Disordered" evidence="2">
    <location>
        <begin position="1"/>
        <end position="41"/>
    </location>
</feature>
<feature type="compositionally biased region" description="Basic residues" evidence="2">
    <location>
        <begin position="1"/>
        <end position="13"/>
    </location>
</feature>
<feature type="compositionally biased region" description="Basic residues" evidence="2">
    <location>
        <begin position="22"/>
        <end position="33"/>
    </location>
</feature>
<name>RL15_METST</name>
<accession>Q2NFX9</accession>
<dbReference type="EMBL" id="CP000102">
    <property type="protein sequence ID" value="ABC57274.1"/>
    <property type="molecule type" value="Genomic_DNA"/>
</dbReference>
<dbReference type="RefSeq" id="WP_011406473.1">
    <property type="nucleotide sequence ID" value="NC_007681.1"/>
</dbReference>
<dbReference type="SMR" id="Q2NFX9"/>
<dbReference type="STRING" id="339860.Msp_0886"/>
<dbReference type="KEGG" id="mst:Msp_0886"/>
<dbReference type="eggNOG" id="arCOG00779">
    <property type="taxonomic scope" value="Archaea"/>
</dbReference>
<dbReference type="HOGENOM" id="CLU_109163_0_0_2"/>
<dbReference type="OrthoDB" id="9418at2157"/>
<dbReference type="Proteomes" id="UP000001931">
    <property type="component" value="Chromosome"/>
</dbReference>
<dbReference type="GO" id="GO:0022625">
    <property type="term" value="C:cytosolic large ribosomal subunit"/>
    <property type="evidence" value="ECO:0007669"/>
    <property type="project" value="TreeGrafter"/>
</dbReference>
<dbReference type="GO" id="GO:0019843">
    <property type="term" value="F:rRNA binding"/>
    <property type="evidence" value="ECO:0007669"/>
    <property type="project" value="UniProtKB-UniRule"/>
</dbReference>
<dbReference type="GO" id="GO:0003735">
    <property type="term" value="F:structural constituent of ribosome"/>
    <property type="evidence" value="ECO:0007669"/>
    <property type="project" value="InterPro"/>
</dbReference>
<dbReference type="GO" id="GO:0006412">
    <property type="term" value="P:translation"/>
    <property type="evidence" value="ECO:0007669"/>
    <property type="project" value="UniProtKB-UniRule"/>
</dbReference>
<dbReference type="Gene3D" id="3.100.10.10">
    <property type="match status" value="1"/>
</dbReference>
<dbReference type="Gene3D" id="4.10.990.10">
    <property type="match status" value="1"/>
</dbReference>
<dbReference type="HAMAP" id="MF_01341">
    <property type="entry name" value="Ribosomal_uL15"/>
    <property type="match status" value="1"/>
</dbReference>
<dbReference type="InterPro" id="IPR027386">
    <property type="entry name" value="Rbsml_uL15_N"/>
</dbReference>
<dbReference type="InterPro" id="IPR030878">
    <property type="entry name" value="Ribosomal_uL15"/>
</dbReference>
<dbReference type="InterPro" id="IPR021131">
    <property type="entry name" value="Ribosomal_uL15/eL18"/>
</dbReference>
<dbReference type="InterPro" id="IPR036227">
    <property type="entry name" value="Ribosomal_uL15/eL18_sf"/>
</dbReference>
<dbReference type="InterPro" id="IPR001196">
    <property type="entry name" value="Ribosomal_uL15_CS"/>
</dbReference>
<dbReference type="PANTHER" id="PTHR11721">
    <property type="entry name" value="60S RIBOSOMAL PROTEIN L27A"/>
    <property type="match status" value="1"/>
</dbReference>
<dbReference type="PANTHER" id="PTHR11721:SF3">
    <property type="entry name" value="LARGE RIBOSOMAL SUBUNIT PROTEIN UL15"/>
    <property type="match status" value="1"/>
</dbReference>
<dbReference type="Pfam" id="PF00828">
    <property type="entry name" value="Ribosomal_L27A"/>
    <property type="match status" value="1"/>
</dbReference>
<dbReference type="SUPFAM" id="SSF52080">
    <property type="entry name" value="Ribosomal proteins L15p and L18e"/>
    <property type="match status" value="1"/>
</dbReference>
<dbReference type="PROSITE" id="PS00475">
    <property type="entry name" value="RIBOSOMAL_L15"/>
    <property type="match status" value="1"/>
</dbReference>
<organism>
    <name type="scientific">Methanosphaera stadtmanae (strain ATCC 43021 / DSM 3091 / JCM 11832 / MCB-3)</name>
    <dbReference type="NCBI Taxonomy" id="339860"/>
    <lineage>
        <taxon>Archaea</taxon>
        <taxon>Methanobacteriati</taxon>
        <taxon>Methanobacteriota</taxon>
        <taxon>Methanomada group</taxon>
        <taxon>Methanobacteria</taxon>
        <taxon>Methanobacteriales</taxon>
        <taxon>Methanobacteriaceae</taxon>
        <taxon>Methanosphaera</taxon>
    </lineage>
</organism>
<sequence length="145" mass="15919">MIRKTKKIRKQRGSRSVGGGCTKKRRGAGHRGGRGQAGGNKHHWTWMVINDPKHFGKYGFKRPQKTIQQFKPINLSVIDNNIEKLLADEIAVKEDGQIVLDVTQLGYNKVLGKGSLSTAITIKAPKFSQSAISKIEDAGGIAEII</sequence>
<protein>
    <recommendedName>
        <fullName evidence="1">Large ribosomal subunit protein uL15</fullName>
    </recommendedName>
    <alternativeName>
        <fullName evidence="3">50S ribosomal protein L15</fullName>
    </alternativeName>
</protein>
<keyword id="KW-1185">Reference proteome</keyword>
<keyword id="KW-0687">Ribonucleoprotein</keyword>
<keyword id="KW-0689">Ribosomal protein</keyword>
<keyword id="KW-0694">RNA-binding</keyword>
<keyword id="KW-0699">rRNA-binding</keyword>
<comment type="function">
    <text evidence="1">Binds to the 23S rRNA.</text>
</comment>
<comment type="subunit">
    <text evidence="1">Part of the 50S ribosomal subunit.</text>
</comment>
<comment type="similarity">
    <text evidence="1">Belongs to the universal ribosomal protein uL15 family.</text>
</comment>
<gene>
    <name evidence="1" type="primary">rpl15</name>
    <name type="ordered locus">Msp_0886</name>
</gene>
<evidence type="ECO:0000255" key="1">
    <source>
        <dbReference type="HAMAP-Rule" id="MF_01341"/>
    </source>
</evidence>
<evidence type="ECO:0000256" key="2">
    <source>
        <dbReference type="SAM" id="MobiDB-lite"/>
    </source>
</evidence>
<evidence type="ECO:0000305" key="3"/>
<proteinExistence type="inferred from homology"/>